<name>Y1003_ARCFU</name>
<keyword id="KW-1185">Reference proteome</keyword>
<protein>
    <recommendedName>
        <fullName>Uncharacterized protein AF_1003</fullName>
    </recommendedName>
</protein>
<proteinExistence type="predicted"/>
<sequence>MDLLRTEFDIQHHLVLSRKDTLHHALIRMIVSTLSTPEELTNLRKKDFRFNKGKNLDYYTVKLSEGGRSRISPVDKRTFEIIQTMPSQPFRMSEEEMNEIVRSYSPPGRIYTCKKLREAVESILSDSDLFGVKLRNDEERYAFMLDFNPLYSGLWDLEDEEGVEDFILSYSEVTGSRDWRKISDETGIEAEIVKKVIESGKKSILRFRADF</sequence>
<organism>
    <name type="scientific">Archaeoglobus fulgidus (strain ATCC 49558 / DSM 4304 / JCM 9628 / NBRC 100126 / VC-16)</name>
    <dbReference type="NCBI Taxonomy" id="224325"/>
    <lineage>
        <taxon>Archaea</taxon>
        <taxon>Methanobacteriati</taxon>
        <taxon>Methanobacteriota</taxon>
        <taxon>Archaeoglobi</taxon>
        <taxon>Archaeoglobales</taxon>
        <taxon>Archaeoglobaceae</taxon>
        <taxon>Archaeoglobus</taxon>
    </lineage>
</organism>
<dbReference type="EMBL" id="AE000782">
    <property type="protein sequence ID" value="AAB90239.1"/>
    <property type="molecule type" value="Genomic_DNA"/>
</dbReference>
<dbReference type="PIR" id="C69375">
    <property type="entry name" value="C69375"/>
</dbReference>
<dbReference type="RefSeq" id="WP_010878503.1">
    <property type="nucleotide sequence ID" value="NC_000917.1"/>
</dbReference>
<dbReference type="SMR" id="O29259"/>
<dbReference type="STRING" id="224325.AF_1003"/>
<dbReference type="PaxDb" id="224325-AF_1003"/>
<dbReference type="EnsemblBacteria" id="AAB90239">
    <property type="protein sequence ID" value="AAB90239"/>
    <property type="gene ID" value="AF_1003"/>
</dbReference>
<dbReference type="KEGG" id="afu:AF_1003"/>
<dbReference type="eggNOG" id="arCOG10227">
    <property type="taxonomic scope" value="Archaea"/>
</dbReference>
<dbReference type="HOGENOM" id="CLU_1318473_0_0_2"/>
<dbReference type="OrthoDB" id="50385at2157"/>
<dbReference type="Proteomes" id="UP000002199">
    <property type="component" value="Chromosome"/>
</dbReference>
<accession>O29259</accession>
<feature type="chain" id="PRO_0000127950" description="Uncharacterized protein AF_1003">
    <location>
        <begin position="1"/>
        <end position="211"/>
    </location>
</feature>
<gene>
    <name type="ordered locus">AF_1003</name>
</gene>
<reference key="1">
    <citation type="journal article" date="1997" name="Nature">
        <title>The complete genome sequence of the hyperthermophilic, sulphate-reducing archaeon Archaeoglobus fulgidus.</title>
        <authorList>
            <person name="Klenk H.-P."/>
            <person name="Clayton R.A."/>
            <person name="Tomb J.-F."/>
            <person name="White O."/>
            <person name="Nelson K.E."/>
            <person name="Ketchum K.A."/>
            <person name="Dodson R.J."/>
            <person name="Gwinn M.L."/>
            <person name="Hickey E.K."/>
            <person name="Peterson J.D."/>
            <person name="Richardson D.L."/>
            <person name="Kerlavage A.R."/>
            <person name="Graham D.E."/>
            <person name="Kyrpides N.C."/>
            <person name="Fleischmann R.D."/>
            <person name="Quackenbush J."/>
            <person name="Lee N.H."/>
            <person name="Sutton G.G."/>
            <person name="Gill S.R."/>
            <person name="Kirkness E.F."/>
            <person name="Dougherty B.A."/>
            <person name="McKenney K."/>
            <person name="Adams M.D."/>
            <person name="Loftus B.J."/>
            <person name="Peterson S.N."/>
            <person name="Reich C.I."/>
            <person name="McNeil L.K."/>
            <person name="Badger J.H."/>
            <person name="Glodek A."/>
            <person name="Zhou L."/>
            <person name="Overbeek R."/>
            <person name="Gocayne J.D."/>
            <person name="Weidman J.F."/>
            <person name="McDonald L.A."/>
            <person name="Utterback T.R."/>
            <person name="Cotton M.D."/>
            <person name="Spriggs T."/>
            <person name="Artiach P."/>
            <person name="Kaine B.P."/>
            <person name="Sykes S.M."/>
            <person name="Sadow P.W."/>
            <person name="D'Andrea K.P."/>
            <person name="Bowman C."/>
            <person name="Fujii C."/>
            <person name="Garland S.A."/>
            <person name="Mason T.M."/>
            <person name="Olsen G.J."/>
            <person name="Fraser C.M."/>
            <person name="Smith H.O."/>
            <person name="Woese C.R."/>
            <person name="Venter J.C."/>
        </authorList>
    </citation>
    <scope>NUCLEOTIDE SEQUENCE [LARGE SCALE GENOMIC DNA]</scope>
    <source>
        <strain>ATCC 49558 / DSM 4304 / JCM 9628 / NBRC 100126 / VC-16</strain>
    </source>
</reference>